<reference key="1">
    <citation type="journal article" date="2011" name="Stand. Genomic Sci.">
        <title>Complete genome sequence of 'Thioalkalivibrio sulfidophilus' HL-EbGr7.</title>
        <authorList>
            <person name="Muyzer G."/>
            <person name="Sorokin D.Y."/>
            <person name="Mavromatis K."/>
            <person name="Lapidus A."/>
            <person name="Clum A."/>
            <person name="Ivanova N."/>
            <person name="Pati A."/>
            <person name="d'Haeseleer P."/>
            <person name="Woyke T."/>
            <person name="Kyrpides N.C."/>
        </authorList>
    </citation>
    <scope>NUCLEOTIDE SEQUENCE [LARGE SCALE GENOMIC DNA]</scope>
    <source>
        <strain>HL-EbGR7</strain>
    </source>
</reference>
<organism>
    <name type="scientific">Thioalkalivibrio sulfidiphilus (strain HL-EbGR7)</name>
    <dbReference type="NCBI Taxonomy" id="396588"/>
    <lineage>
        <taxon>Bacteria</taxon>
        <taxon>Pseudomonadati</taxon>
        <taxon>Pseudomonadota</taxon>
        <taxon>Gammaproteobacteria</taxon>
        <taxon>Chromatiales</taxon>
        <taxon>Ectothiorhodospiraceae</taxon>
        <taxon>Thioalkalivibrio</taxon>
    </lineage>
</organism>
<keyword id="KW-0028">Amino-acid biosynthesis</keyword>
<keyword id="KW-0055">Arginine biosynthesis</keyword>
<keyword id="KW-0067">ATP-binding</keyword>
<keyword id="KW-0315">Glutamine amidotransferase</keyword>
<keyword id="KW-0436">Ligase</keyword>
<keyword id="KW-0547">Nucleotide-binding</keyword>
<keyword id="KW-0665">Pyrimidine biosynthesis</keyword>
<keyword id="KW-1185">Reference proteome</keyword>
<accession>B8GNX4</accession>
<comment type="function">
    <text evidence="1">Small subunit of the glutamine-dependent carbamoyl phosphate synthetase (CPSase). CPSase catalyzes the formation of carbamoyl phosphate from the ammonia moiety of glutamine, carbonate, and phosphate donated by ATP, constituting the first step of 2 biosynthetic pathways, one leading to arginine and/or urea and the other to pyrimidine nucleotides. The small subunit (glutamine amidotransferase) binds and cleaves glutamine to supply the large subunit with the substrate ammonia.</text>
</comment>
<comment type="catalytic activity">
    <reaction evidence="1">
        <text>hydrogencarbonate + L-glutamine + 2 ATP + H2O = carbamoyl phosphate + L-glutamate + 2 ADP + phosphate + 2 H(+)</text>
        <dbReference type="Rhea" id="RHEA:18633"/>
        <dbReference type="ChEBI" id="CHEBI:15377"/>
        <dbReference type="ChEBI" id="CHEBI:15378"/>
        <dbReference type="ChEBI" id="CHEBI:17544"/>
        <dbReference type="ChEBI" id="CHEBI:29985"/>
        <dbReference type="ChEBI" id="CHEBI:30616"/>
        <dbReference type="ChEBI" id="CHEBI:43474"/>
        <dbReference type="ChEBI" id="CHEBI:58228"/>
        <dbReference type="ChEBI" id="CHEBI:58359"/>
        <dbReference type="ChEBI" id="CHEBI:456216"/>
        <dbReference type="EC" id="6.3.5.5"/>
    </reaction>
</comment>
<comment type="catalytic activity">
    <molecule>Carbamoyl phosphate synthase small chain</molecule>
    <reaction evidence="1">
        <text>L-glutamine + H2O = L-glutamate + NH4(+)</text>
        <dbReference type="Rhea" id="RHEA:15889"/>
        <dbReference type="ChEBI" id="CHEBI:15377"/>
        <dbReference type="ChEBI" id="CHEBI:28938"/>
        <dbReference type="ChEBI" id="CHEBI:29985"/>
        <dbReference type="ChEBI" id="CHEBI:58359"/>
    </reaction>
</comment>
<comment type="pathway">
    <text evidence="1">Amino-acid biosynthesis; L-arginine biosynthesis; carbamoyl phosphate from bicarbonate: step 1/1.</text>
</comment>
<comment type="pathway">
    <text evidence="1">Pyrimidine metabolism; UMP biosynthesis via de novo pathway; (S)-dihydroorotate from bicarbonate: step 1/3.</text>
</comment>
<comment type="subunit">
    <text evidence="1">Composed of two chains; the small (or glutamine) chain promotes the hydrolysis of glutamine to ammonia, which is used by the large (or ammonia) chain to synthesize carbamoyl phosphate. Tetramer of heterodimers (alpha,beta)4.</text>
</comment>
<comment type="similarity">
    <text evidence="1">Belongs to the CarA family.</text>
</comment>
<feature type="chain" id="PRO_1000164700" description="Carbamoyl phosphate synthase small chain">
    <location>
        <begin position="1"/>
        <end position="379"/>
    </location>
</feature>
<feature type="domain" description="Glutamine amidotransferase type-1" evidence="1">
    <location>
        <begin position="191"/>
        <end position="378"/>
    </location>
</feature>
<feature type="region of interest" description="CPSase" evidence="1">
    <location>
        <begin position="1"/>
        <end position="187"/>
    </location>
</feature>
<feature type="active site" description="Nucleophile" evidence="1">
    <location>
        <position position="267"/>
    </location>
</feature>
<feature type="active site" evidence="1">
    <location>
        <position position="351"/>
    </location>
</feature>
<feature type="active site" evidence="1">
    <location>
        <position position="353"/>
    </location>
</feature>
<feature type="binding site" evidence="1">
    <location>
        <position position="48"/>
    </location>
    <ligand>
        <name>L-glutamine</name>
        <dbReference type="ChEBI" id="CHEBI:58359"/>
    </ligand>
</feature>
<feature type="binding site" evidence="1">
    <location>
        <position position="239"/>
    </location>
    <ligand>
        <name>L-glutamine</name>
        <dbReference type="ChEBI" id="CHEBI:58359"/>
    </ligand>
</feature>
<feature type="binding site" evidence="1">
    <location>
        <position position="241"/>
    </location>
    <ligand>
        <name>L-glutamine</name>
        <dbReference type="ChEBI" id="CHEBI:58359"/>
    </ligand>
</feature>
<feature type="binding site" evidence="1">
    <location>
        <position position="268"/>
    </location>
    <ligand>
        <name>L-glutamine</name>
        <dbReference type="ChEBI" id="CHEBI:58359"/>
    </ligand>
</feature>
<feature type="binding site" evidence="1">
    <location>
        <position position="271"/>
    </location>
    <ligand>
        <name>L-glutamine</name>
        <dbReference type="ChEBI" id="CHEBI:58359"/>
    </ligand>
</feature>
<feature type="binding site" evidence="1">
    <location>
        <position position="309"/>
    </location>
    <ligand>
        <name>L-glutamine</name>
        <dbReference type="ChEBI" id="CHEBI:58359"/>
    </ligand>
</feature>
<feature type="binding site" evidence="1">
    <location>
        <position position="311"/>
    </location>
    <ligand>
        <name>L-glutamine</name>
        <dbReference type="ChEBI" id="CHEBI:58359"/>
    </ligand>
</feature>
<feature type="binding site" evidence="1">
    <location>
        <position position="312"/>
    </location>
    <ligand>
        <name>L-glutamine</name>
        <dbReference type="ChEBI" id="CHEBI:58359"/>
    </ligand>
</feature>
<protein>
    <recommendedName>
        <fullName evidence="1">Carbamoyl phosphate synthase small chain</fullName>
        <ecNumber evidence="1">6.3.5.5</ecNumber>
    </recommendedName>
    <alternativeName>
        <fullName evidence="1">Carbamoyl phosphate synthetase glutamine chain</fullName>
    </alternativeName>
</protein>
<evidence type="ECO:0000255" key="1">
    <source>
        <dbReference type="HAMAP-Rule" id="MF_01209"/>
    </source>
</evidence>
<sequence>MNFTPALLALEDGSLFHGISIGAPGQTVGEVVFNTAMTGYQEILTDPSYARQIVTLTYPHIGNTGVNPEDEESAGVHAAGLVIRDLPPLVSSWRSRESLPDYLTRFGVVAIANIDTRRLTRILREKGAQNGCIMAGEIDEQAALAAARGFPGLKGMDLAKEVSTAEIYDWTEGTWQLGSGHAPAPASSPYKVVAYDFGVKRNILRMLVDRGCQVTVVPAQTPAAQVLAMQPDGVFLSNGPGDPEPCDYAISAIREIVDTGIPTYGICLGHQLLGLASGARTVKMKFGHHGANHPVQDLDSKRVMISSQNHGFAVDENTLPGNVKATHRSLFDGTLQGIARTDRPAFSFQGHPEASPGPHDVAPLFDRFIELMKPQGVRK</sequence>
<dbReference type="EC" id="6.3.5.5" evidence="1"/>
<dbReference type="EMBL" id="CP001339">
    <property type="protein sequence ID" value="ACL72063.1"/>
    <property type="molecule type" value="Genomic_DNA"/>
</dbReference>
<dbReference type="RefSeq" id="WP_012637547.1">
    <property type="nucleotide sequence ID" value="NC_011901.1"/>
</dbReference>
<dbReference type="SMR" id="B8GNX4"/>
<dbReference type="STRING" id="396588.Tgr7_0975"/>
<dbReference type="KEGG" id="tgr:Tgr7_0975"/>
<dbReference type="eggNOG" id="COG0505">
    <property type="taxonomic scope" value="Bacteria"/>
</dbReference>
<dbReference type="HOGENOM" id="CLU_035901_2_1_6"/>
<dbReference type="OrthoDB" id="9804328at2"/>
<dbReference type="UniPathway" id="UPA00068">
    <property type="reaction ID" value="UER00171"/>
</dbReference>
<dbReference type="UniPathway" id="UPA00070">
    <property type="reaction ID" value="UER00115"/>
</dbReference>
<dbReference type="Proteomes" id="UP000002383">
    <property type="component" value="Chromosome"/>
</dbReference>
<dbReference type="GO" id="GO:0005524">
    <property type="term" value="F:ATP binding"/>
    <property type="evidence" value="ECO:0007669"/>
    <property type="project" value="UniProtKB-UniRule"/>
</dbReference>
<dbReference type="GO" id="GO:0004088">
    <property type="term" value="F:carbamoyl-phosphate synthase (glutamine-hydrolyzing) activity"/>
    <property type="evidence" value="ECO:0007669"/>
    <property type="project" value="UniProtKB-UniRule"/>
</dbReference>
<dbReference type="GO" id="GO:0004359">
    <property type="term" value="F:glutaminase activity"/>
    <property type="evidence" value="ECO:0007669"/>
    <property type="project" value="RHEA"/>
</dbReference>
<dbReference type="GO" id="GO:0006207">
    <property type="term" value="P:'de novo' pyrimidine nucleobase biosynthetic process"/>
    <property type="evidence" value="ECO:0007669"/>
    <property type="project" value="InterPro"/>
</dbReference>
<dbReference type="GO" id="GO:0044205">
    <property type="term" value="P:'de novo' UMP biosynthetic process"/>
    <property type="evidence" value="ECO:0007669"/>
    <property type="project" value="UniProtKB-UniRule"/>
</dbReference>
<dbReference type="GO" id="GO:0006541">
    <property type="term" value="P:glutamine metabolic process"/>
    <property type="evidence" value="ECO:0007669"/>
    <property type="project" value="InterPro"/>
</dbReference>
<dbReference type="GO" id="GO:0006526">
    <property type="term" value="P:L-arginine biosynthetic process"/>
    <property type="evidence" value="ECO:0007669"/>
    <property type="project" value="UniProtKB-UniRule"/>
</dbReference>
<dbReference type="CDD" id="cd01744">
    <property type="entry name" value="GATase1_CPSase"/>
    <property type="match status" value="1"/>
</dbReference>
<dbReference type="FunFam" id="3.40.50.880:FF:000011">
    <property type="entry name" value="Carbamoyl-phosphate synthase small chain"/>
    <property type="match status" value="1"/>
</dbReference>
<dbReference type="FunFam" id="3.50.30.20:FF:000001">
    <property type="entry name" value="Carbamoyl-phosphate synthase small chain"/>
    <property type="match status" value="1"/>
</dbReference>
<dbReference type="Gene3D" id="3.40.50.880">
    <property type="match status" value="1"/>
</dbReference>
<dbReference type="Gene3D" id="3.50.30.20">
    <property type="entry name" value="Carbamoyl-phosphate synthase small subunit, N-terminal domain"/>
    <property type="match status" value="1"/>
</dbReference>
<dbReference type="HAMAP" id="MF_01209">
    <property type="entry name" value="CPSase_S_chain"/>
    <property type="match status" value="1"/>
</dbReference>
<dbReference type="InterPro" id="IPR050472">
    <property type="entry name" value="Anth_synth/Amidotransfase"/>
</dbReference>
<dbReference type="InterPro" id="IPR006274">
    <property type="entry name" value="CarbamoylP_synth_ssu"/>
</dbReference>
<dbReference type="InterPro" id="IPR002474">
    <property type="entry name" value="CarbamoylP_synth_ssu_N"/>
</dbReference>
<dbReference type="InterPro" id="IPR036480">
    <property type="entry name" value="CarbP_synth_ssu_N_sf"/>
</dbReference>
<dbReference type="InterPro" id="IPR029062">
    <property type="entry name" value="Class_I_gatase-like"/>
</dbReference>
<dbReference type="InterPro" id="IPR035686">
    <property type="entry name" value="CPSase_GATase1"/>
</dbReference>
<dbReference type="InterPro" id="IPR017926">
    <property type="entry name" value="GATASE"/>
</dbReference>
<dbReference type="NCBIfam" id="TIGR01368">
    <property type="entry name" value="CPSaseIIsmall"/>
    <property type="match status" value="1"/>
</dbReference>
<dbReference type="NCBIfam" id="NF009475">
    <property type="entry name" value="PRK12838.1"/>
    <property type="match status" value="1"/>
</dbReference>
<dbReference type="PANTHER" id="PTHR43418:SF7">
    <property type="entry name" value="CARBAMOYL-PHOSPHATE SYNTHASE SMALL CHAIN"/>
    <property type="match status" value="1"/>
</dbReference>
<dbReference type="PANTHER" id="PTHR43418">
    <property type="entry name" value="MULTIFUNCTIONAL TRYPTOPHAN BIOSYNTHESIS PROTEIN-RELATED"/>
    <property type="match status" value="1"/>
</dbReference>
<dbReference type="Pfam" id="PF00988">
    <property type="entry name" value="CPSase_sm_chain"/>
    <property type="match status" value="1"/>
</dbReference>
<dbReference type="Pfam" id="PF00117">
    <property type="entry name" value="GATase"/>
    <property type="match status" value="1"/>
</dbReference>
<dbReference type="PRINTS" id="PR00097">
    <property type="entry name" value="ANTSNTHASEII"/>
</dbReference>
<dbReference type="PRINTS" id="PR00099">
    <property type="entry name" value="CPSGATASE"/>
</dbReference>
<dbReference type="PRINTS" id="PR00096">
    <property type="entry name" value="GATASE"/>
</dbReference>
<dbReference type="SMART" id="SM01097">
    <property type="entry name" value="CPSase_sm_chain"/>
    <property type="match status" value="1"/>
</dbReference>
<dbReference type="SUPFAM" id="SSF52021">
    <property type="entry name" value="Carbamoyl phosphate synthetase, small subunit N-terminal domain"/>
    <property type="match status" value="1"/>
</dbReference>
<dbReference type="SUPFAM" id="SSF52317">
    <property type="entry name" value="Class I glutamine amidotransferase-like"/>
    <property type="match status" value="1"/>
</dbReference>
<dbReference type="PROSITE" id="PS51273">
    <property type="entry name" value="GATASE_TYPE_1"/>
    <property type="match status" value="1"/>
</dbReference>
<gene>
    <name evidence="1" type="primary">carA</name>
    <name type="ordered locus">Tgr7_0975</name>
</gene>
<proteinExistence type="inferred from homology"/>
<name>CARA_THISH</name>